<reference key="1">
    <citation type="journal article" date="2009" name="BMC Genomics">
        <title>Complete genome sequence of the sugarcane nitrogen-fixing endophyte Gluconacetobacter diazotrophicus Pal5.</title>
        <authorList>
            <person name="Bertalan M."/>
            <person name="Albano R."/>
            <person name="de Padua V."/>
            <person name="Rouws L."/>
            <person name="Rojas C."/>
            <person name="Hemerly A."/>
            <person name="Teixeira K."/>
            <person name="Schwab S."/>
            <person name="Araujo J."/>
            <person name="Oliveira A."/>
            <person name="Franca L."/>
            <person name="Magalhaes V."/>
            <person name="Alqueres S."/>
            <person name="Cardoso A."/>
            <person name="Almeida W."/>
            <person name="Loureiro M.M."/>
            <person name="Nogueira E."/>
            <person name="Cidade D."/>
            <person name="Oliveira D."/>
            <person name="Simao T."/>
            <person name="Macedo J."/>
            <person name="Valadao A."/>
            <person name="Dreschsel M."/>
            <person name="Freitas F."/>
            <person name="Vidal M."/>
            <person name="Guedes H."/>
            <person name="Rodrigues E."/>
            <person name="Meneses C."/>
            <person name="Brioso P."/>
            <person name="Pozzer L."/>
            <person name="Figueiredo D."/>
            <person name="Montano H."/>
            <person name="Junior J."/>
            <person name="de Souza Filho G."/>
            <person name="Martin Quintana Flores V."/>
            <person name="Ferreira B."/>
            <person name="Branco A."/>
            <person name="Gonzalez P."/>
            <person name="Guillobel H."/>
            <person name="Lemos M."/>
            <person name="Seibel L."/>
            <person name="Macedo J."/>
            <person name="Alves-Ferreira M."/>
            <person name="Sachetto-Martins G."/>
            <person name="Coelho A."/>
            <person name="Santos E."/>
            <person name="Amaral G."/>
            <person name="Neves A."/>
            <person name="Pacheco A.B."/>
            <person name="Carvalho D."/>
            <person name="Lery L."/>
            <person name="Bisch P."/>
            <person name="Rossle S.C."/>
            <person name="Urmenyi T."/>
            <person name="Rael Pereira A."/>
            <person name="Silva R."/>
            <person name="Rondinelli E."/>
            <person name="von Kruger W."/>
            <person name="Martins O."/>
            <person name="Baldani J.I."/>
            <person name="Ferreira P.C."/>
        </authorList>
    </citation>
    <scope>NUCLEOTIDE SEQUENCE [LARGE SCALE GENOMIC DNA]</scope>
    <source>
        <strain>ATCC 49037 / DSM 5601 / CCUG 37298 / CIP 103539 / LMG 7603 / PAl5</strain>
    </source>
</reference>
<reference key="2">
    <citation type="journal article" date="2010" name="Stand. Genomic Sci.">
        <title>Two genome sequences of the same bacterial strain, Gluconacetobacter diazotrophicus PAl 5, suggest a new standard in genome sequence submission.</title>
        <authorList>
            <person name="Giongo A."/>
            <person name="Tyler H.L."/>
            <person name="Zipperer U.N."/>
            <person name="Triplett E.W."/>
        </authorList>
    </citation>
    <scope>NUCLEOTIDE SEQUENCE [LARGE SCALE GENOMIC DNA]</scope>
    <source>
        <strain>ATCC 49037 / DSM 5601 / CCUG 37298 / CIP 103539 / LMG 7603 / PAl5</strain>
    </source>
</reference>
<gene>
    <name evidence="1" type="primary">murA</name>
    <name type="ordered locus">GDI1442</name>
    <name type="ordered locus">Gdia_2142</name>
</gene>
<dbReference type="EC" id="2.5.1.7" evidence="1"/>
<dbReference type="EMBL" id="AM889285">
    <property type="protein sequence ID" value="CAP55385.1"/>
    <property type="molecule type" value="Genomic_DNA"/>
</dbReference>
<dbReference type="EMBL" id="CP001189">
    <property type="protein sequence ID" value="ACI51900.1"/>
    <property type="molecule type" value="Genomic_DNA"/>
</dbReference>
<dbReference type="RefSeq" id="WP_012224739.1">
    <property type="nucleotide sequence ID" value="NC_010125.1"/>
</dbReference>
<dbReference type="SMR" id="A9HFN0"/>
<dbReference type="STRING" id="272568.GDI1442"/>
<dbReference type="KEGG" id="gdi:GDI1442"/>
<dbReference type="KEGG" id="gdj:Gdia_2142"/>
<dbReference type="eggNOG" id="COG0766">
    <property type="taxonomic scope" value="Bacteria"/>
</dbReference>
<dbReference type="HOGENOM" id="CLU_027387_0_0_5"/>
<dbReference type="OrthoDB" id="9803760at2"/>
<dbReference type="UniPathway" id="UPA00219"/>
<dbReference type="Proteomes" id="UP000001176">
    <property type="component" value="Chromosome"/>
</dbReference>
<dbReference type="GO" id="GO:0005737">
    <property type="term" value="C:cytoplasm"/>
    <property type="evidence" value="ECO:0007669"/>
    <property type="project" value="UniProtKB-SubCell"/>
</dbReference>
<dbReference type="GO" id="GO:0008760">
    <property type="term" value="F:UDP-N-acetylglucosamine 1-carboxyvinyltransferase activity"/>
    <property type="evidence" value="ECO:0007669"/>
    <property type="project" value="UniProtKB-UniRule"/>
</dbReference>
<dbReference type="GO" id="GO:0051301">
    <property type="term" value="P:cell division"/>
    <property type="evidence" value="ECO:0007669"/>
    <property type="project" value="UniProtKB-KW"/>
</dbReference>
<dbReference type="GO" id="GO:0071555">
    <property type="term" value="P:cell wall organization"/>
    <property type="evidence" value="ECO:0007669"/>
    <property type="project" value="UniProtKB-KW"/>
</dbReference>
<dbReference type="GO" id="GO:0009252">
    <property type="term" value="P:peptidoglycan biosynthetic process"/>
    <property type="evidence" value="ECO:0007669"/>
    <property type="project" value="UniProtKB-UniRule"/>
</dbReference>
<dbReference type="GO" id="GO:0008360">
    <property type="term" value="P:regulation of cell shape"/>
    <property type="evidence" value="ECO:0007669"/>
    <property type="project" value="UniProtKB-KW"/>
</dbReference>
<dbReference type="GO" id="GO:0019277">
    <property type="term" value="P:UDP-N-acetylgalactosamine biosynthetic process"/>
    <property type="evidence" value="ECO:0007669"/>
    <property type="project" value="InterPro"/>
</dbReference>
<dbReference type="CDD" id="cd01555">
    <property type="entry name" value="UdpNAET"/>
    <property type="match status" value="1"/>
</dbReference>
<dbReference type="FunFam" id="3.65.10.10:FF:000001">
    <property type="entry name" value="UDP-N-acetylglucosamine 1-carboxyvinyltransferase"/>
    <property type="match status" value="1"/>
</dbReference>
<dbReference type="Gene3D" id="3.65.10.10">
    <property type="entry name" value="Enolpyruvate transferase domain"/>
    <property type="match status" value="2"/>
</dbReference>
<dbReference type="HAMAP" id="MF_00111">
    <property type="entry name" value="MurA"/>
    <property type="match status" value="1"/>
</dbReference>
<dbReference type="InterPro" id="IPR001986">
    <property type="entry name" value="Enolpyruvate_Tfrase_dom"/>
</dbReference>
<dbReference type="InterPro" id="IPR036968">
    <property type="entry name" value="Enolpyruvate_Tfrase_sf"/>
</dbReference>
<dbReference type="InterPro" id="IPR050068">
    <property type="entry name" value="MurA_subfamily"/>
</dbReference>
<dbReference type="InterPro" id="IPR013792">
    <property type="entry name" value="RNA3'P_cycl/enolpyr_Trfase_a/b"/>
</dbReference>
<dbReference type="InterPro" id="IPR005750">
    <property type="entry name" value="UDP_GlcNAc_COvinyl_MurA"/>
</dbReference>
<dbReference type="NCBIfam" id="TIGR01072">
    <property type="entry name" value="murA"/>
    <property type="match status" value="1"/>
</dbReference>
<dbReference type="NCBIfam" id="NF006873">
    <property type="entry name" value="PRK09369.1"/>
    <property type="match status" value="1"/>
</dbReference>
<dbReference type="PANTHER" id="PTHR43783">
    <property type="entry name" value="UDP-N-ACETYLGLUCOSAMINE 1-CARBOXYVINYLTRANSFERASE"/>
    <property type="match status" value="1"/>
</dbReference>
<dbReference type="PANTHER" id="PTHR43783:SF1">
    <property type="entry name" value="UDP-N-ACETYLGLUCOSAMINE 1-CARBOXYVINYLTRANSFERASE"/>
    <property type="match status" value="1"/>
</dbReference>
<dbReference type="Pfam" id="PF00275">
    <property type="entry name" value="EPSP_synthase"/>
    <property type="match status" value="1"/>
</dbReference>
<dbReference type="SUPFAM" id="SSF55205">
    <property type="entry name" value="EPT/RTPC-like"/>
    <property type="match status" value="1"/>
</dbReference>
<accession>A9HFN0</accession>
<accession>B5ZE16</accession>
<evidence type="ECO:0000255" key="1">
    <source>
        <dbReference type="HAMAP-Rule" id="MF_00111"/>
    </source>
</evidence>
<protein>
    <recommendedName>
        <fullName evidence="1">UDP-N-acetylglucosamine 1-carboxyvinyltransferase</fullName>
        <ecNumber evidence="1">2.5.1.7</ecNumber>
    </recommendedName>
    <alternativeName>
        <fullName evidence="1">Enoylpyruvate transferase</fullName>
    </alternativeName>
    <alternativeName>
        <fullName evidence="1">UDP-N-acetylglucosamine enolpyruvyl transferase</fullName>
        <shortName evidence="1">EPT</shortName>
    </alternativeName>
</protein>
<organism>
    <name type="scientific">Gluconacetobacter diazotrophicus (strain ATCC 49037 / DSM 5601 / CCUG 37298 / CIP 103539 / LMG 7603 / PAl5)</name>
    <dbReference type="NCBI Taxonomy" id="272568"/>
    <lineage>
        <taxon>Bacteria</taxon>
        <taxon>Pseudomonadati</taxon>
        <taxon>Pseudomonadota</taxon>
        <taxon>Alphaproteobacteria</taxon>
        <taxon>Acetobacterales</taxon>
        <taxon>Acetobacteraceae</taxon>
        <taxon>Gluconacetobacter</taxon>
    </lineage>
</organism>
<name>MURA_GLUDA</name>
<feature type="chain" id="PRO_1000075972" description="UDP-N-acetylglucosamine 1-carboxyvinyltransferase">
    <location>
        <begin position="1"/>
        <end position="420"/>
    </location>
</feature>
<feature type="active site" description="Proton donor" evidence="1">
    <location>
        <position position="118"/>
    </location>
</feature>
<feature type="binding site" evidence="1">
    <location>
        <begin position="22"/>
        <end position="23"/>
    </location>
    <ligand>
        <name>phosphoenolpyruvate</name>
        <dbReference type="ChEBI" id="CHEBI:58702"/>
    </ligand>
</feature>
<feature type="binding site" evidence="1">
    <location>
        <position position="94"/>
    </location>
    <ligand>
        <name>UDP-N-acetyl-alpha-D-glucosamine</name>
        <dbReference type="ChEBI" id="CHEBI:57705"/>
    </ligand>
</feature>
<feature type="binding site" evidence="1">
    <location>
        <position position="307"/>
    </location>
    <ligand>
        <name>UDP-N-acetyl-alpha-D-glucosamine</name>
        <dbReference type="ChEBI" id="CHEBI:57705"/>
    </ligand>
</feature>
<feature type="binding site" evidence="1">
    <location>
        <position position="329"/>
    </location>
    <ligand>
        <name>UDP-N-acetyl-alpha-D-glucosamine</name>
        <dbReference type="ChEBI" id="CHEBI:57705"/>
    </ligand>
</feature>
<feature type="modified residue" description="2-(S-cysteinyl)pyruvic acid O-phosphothioketal" evidence="1">
    <location>
        <position position="118"/>
    </location>
</feature>
<keyword id="KW-0131">Cell cycle</keyword>
<keyword id="KW-0132">Cell division</keyword>
<keyword id="KW-0133">Cell shape</keyword>
<keyword id="KW-0961">Cell wall biogenesis/degradation</keyword>
<keyword id="KW-0963">Cytoplasm</keyword>
<keyword id="KW-0573">Peptidoglycan synthesis</keyword>
<keyword id="KW-0670">Pyruvate</keyword>
<keyword id="KW-1185">Reference proteome</keyword>
<keyword id="KW-0808">Transferase</keyword>
<sequence length="420" mass="44569">MDRFIIHGGHRLRGDIVIGGAKNAALKLLVAGLLTSERLVLRNVPRIADITTMRRLLEQHGVTVEDLEGDGGTLAVGGTITNTEAPYDIVSQMRASILVLGPLLARCGEARVSLPGGCAIGTRPVDMHLKGLEALGAEISLENGYINARAPRGLVGERIILPFASVGATENLLMASCLARGRTEIINAAREPEIADLVACLNGMGARITGTGTGSLAIEGVEALHGTTHRVMPDRIECGTYACAAGITGGELRLIGGRADHLGAVVRALEEAGVEVFQEDDALRVRRTGALRGVDIMTEPYPGFPTDMQAQFMALLSVAEGASMVTETIFENRFMHVPELNRMGARINVHGSSAIIRGVHSLSGAPVMATDLRASFSLILAGLAAHGETILSRVYHLDRGYEAVEQKLARCGAQIERVRE</sequence>
<proteinExistence type="inferred from homology"/>
<comment type="function">
    <text evidence="1">Cell wall formation. Adds enolpyruvyl to UDP-N-acetylglucosamine.</text>
</comment>
<comment type="catalytic activity">
    <reaction evidence="1">
        <text>phosphoenolpyruvate + UDP-N-acetyl-alpha-D-glucosamine = UDP-N-acetyl-3-O-(1-carboxyvinyl)-alpha-D-glucosamine + phosphate</text>
        <dbReference type="Rhea" id="RHEA:18681"/>
        <dbReference type="ChEBI" id="CHEBI:43474"/>
        <dbReference type="ChEBI" id="CHEBI:57705"/>
        <dbReference type="ChEBI" id="CHEBI:58702"/>
        <dbReference type="ChEBI" id="CHEBI:68483"/>
        <dbReference type="EC" id="2.5.1.7"/>
    </reaction>
</comment>
<comment type="pathway">
    <text evidence="1">Cell wall biogenesis; peptidoglycan biosynthesis.</text>
</comment>
<comment type="subcellular location">
    <subcellularLocation>
        <location evidence="1">Cytoplasm</location>
    </subcellularLocation>
</comment>
<comment type="similarity">
    <text evidence="1">Belongs to the EPSP synthase family. MurA subfamily.</text>
</comment>